<evidence type="ECO:0000255" key="1">
    <source>
        <dbReference type="HAMAP-Rule" id="MF_01009"/>
    </source>
</evidence>
<name>GLPE_SALEP</name>
<keyword id="KW-0963">Cytoplasm</keyword>
<keyword id="KW-0808">Transferase</keyword>
<gene>
    <name evidence="1" type="primary">glpE</name>
    <name type="ordered locus">SEN3350</name>
</gene>
<comment type="function">
    <text evidence="1">Transferase that catalyzes the transfer of sulfur from thiosulfate to thiophilic acceptors such as cyanide or dithiols. May function in a CysM-independent thiosulfate assimilation pathway by catalyzing the conversion of thiosulfate to sulfite, which can then be used for L-cysteine biosynthesis.</text>
</comment>
<comment type="catalytic activity">
    <reaction evidence="1">
        <text>thiosulfate + hydrogen cyanide = thiocyanate + sulfite + 2 H(+)</text>
        <dbReference type="Rhea" id="RHEA:16881"/>
        <dbReference type="ChEBI" id="CHEBI:15378"/>
        <dbReference type="ChEBI" id="CHEBI:17359"/>
        <dbReference type="ChEBI" id="CHEBI:18022"/>
        <dbReference type="ChEBI" id="CHEBI:18407"/>
        <dbReference type="ChEBI" id="CHEBI:33542"/>
        <dbReference type="EC" id="2.8.1.1"/>
    </reaction>
</comment>
<comment type="catalytic activity">
    <reaction evidence="1">
        <text>thiosulfate + [thioredoxin]-dithiol = [thioredoxin]-disulfide + hydrogen sulfide + sulfite + 2 H(+)</text>
        <dbReference type="Rhea" id="RHEA:83859"/>
        <dbReference type="Rhea" id="RHEA-COMP:10698"/>
        <dbReference type="Rhea" id="RHEA-COMP:10700"/>
        <dbReference type="ChEBI" id="CHEBI:15378"/>
        <dbReference type="ChEBI" id="CHEBI:17359"/>
        <dbReference type="ChEBI" id="CHEBI:29919"/>
        <dbReference type="ChEBI" id="CHEBI:29950"/>
        <dbReference type="ChEBI" id="CHEBI:33542"/>
        <dbReference type="ChEBI" id="CHEBI:50058"/>
    </reaction>
</comment>
<comment type="subcellular location">
    <subcellularLocation>
        <location evidence="1">Cytoplasm</location>
    </subcellularLocation>
</comment>
<comment type="similarity">
    <text evidence="1">Belongs to the GlpE family.</text>
</comment>
<feature type="chain" id="PRO_1000190106" description="Thiosulfate sulfurtransferase GlpE">
    <location>
        <begin position="1"/>
        <end position="108"/>
    </location>
</feature>
<feature type="domain" description="Rhodanese" evidence="1">
    <location>
        <begin position="17"/>
        <end position="105"/>
    </location>
</feature>
<feature type="active site" description="Cysteine persulfide intermediate" evidence="1">
    <location>
        <position position="65"/>
    </location>
</feature>
<organism>
    <name type="scientific">Salmonella enteritidis PT4 (strain P125109)</name>
    <dbReference type="NCBI Taxonomy" id="550537"/>
    <lineage>
        <taxon>Bacteria</taxon>
        <taxon>Pseudomonadati</taxon>
        <taxon>Pseudomonadota</taxon>
        <taxon>Gammaproteobacteria</taxon>
        <taxon>Enterobacterales</taxon>
        <taxon>Enterobacteriaceae</taxon>
        <taxon>Salmonella</taxon>
    </lineage>
</organism>
<reference key="1">
    <citation type="journal article" date="2008" name="Genome Res.">
        <title>Comparative genome analysis of Salmonella enteritidis PT4 and Salmonella gallinarum 287/91 provides insights into evolutionary and host adaptation pathways.</title>
        <authorList>
            <person name="Thomson N.R."/>
            <person name="Clayton D.J."/>
            <person name="Windhorst D."/>
            <person name="Vernikos G."/>
            <person name="Davidson S."/>
            <person name="Churcher C."/>
            <person name="Quail M.A."/>
            <person name="Stevens M."/>
            <person name="Jones M.A."/>
            <person name="Watson M."/>
            <person name="Barron A."/>
            <person name="Layton A."/>
            <person name="Pickard D."/>
            <person name="Kingsley R.A."/>
            <person name="Bignell A."/>
            <person name="Clark L."/>
            <person name="Harris B."/>
            <person name="Ormond D."/>
            <person name="Abdellah Z."/>
            <person name="Brooks K."/>
            <person name="Cherevach I."/>
            <person name="Chillingworth T."/>
            <person name="Woodward J."/>
            <person name="Norberczak H."/>
            <person name="Lord A."/>
            <person name="Arrowsmith C."/>
            <person name="Jagels K."/>
            <person name="Moule S."/>
            <person name="Mungall K."/>
            <person name="Saunders M."/>
            <person name="Whitehead S."/>
            <person name="Chabalgoity J.A."/>
            <person name="Maskell D."/>
            <person name="Humphreys T."/>
            <person name="Roberts M."/>
            <person name="Barrow P.A."/>
            <person name="Dougan G."/>
            <person name="Parkhill J."/>
        </authorList>
    </citation>
    <scope>NUCLEOTIDE SEQUENCE [LARGE SCALE GENOMIC DNA]</scope>
    <source>
        <strain>P125109</strain>
    </source>
</reference>
<proteinExistence type="inferred from homology"/>
<dbReference type="EC" id="2.8.1.1" evidence="1"/>
<dbReference type="EMBL" id="AM933172">
    <property type="protein sequence ID" value="CAR34925.1"/>
    <property type="molecule type" value="Genomic_DNA"/>
</dbReference>
<dbReference type="RefSeq" id="WP_000434523.1">
    <property type="nucleotide sequence ID" value="NC_011294.1"/>
</dbReference>
<dbReference type="SMR" id="B5R384"/>
<dbReference type="KEGG" id="set:SEN3350"/>
<dbReference type="HOGENOM" id="CLU_089574_14_0_6"/>
<dbReference type="Proteomes" id="UP000000613">
    <property type="component" value="Chromosome"/>
</dbReference>
<dbReference type="GO" id="GO:0005737">
    <property type="term" value="C:cytoplasm"/>
    <property type="evidence" value="ECO:0007669"/>
    <property type="project" value="UniProtKB-SubCell"/>
</dbReference>
<dbReference type="GO" id="GO:0004792">
    <property type="term" value="F:thiosulfate-cyanide sulfurtransferase activity"/>
    <property type="evidence" value="ECO:0007669"/>
    <property type="project" value="UniProtKB-UniRule"/>
</dbReference>
<dbReference type="GO" id="GO:0006071">
    <property type="term" value="P:glycerol metabolic process"/>
    <property type="evidence" value="ECO:0007669"/>
    <property type="project" value="UniProtKB-UniRule"/>
</dbReference>
<dbReference type="CDD" id="cd01444">
    <property type="entry name" value="GlpE_ST"/>
    <property type="match status" value="1"/>
</dbReference>
<dbReference type="FunFam" id="3.40.250.10:FF:000007">
    <property type="entry name" value="Thiosulfate sulfurtransferase GlpE"/>
    <property type="match status" value="1"/>
</dbReference>
<dbReference type="Gene3D" id="3.40.250.10">
    <property type="entry name" value="Rhodanese-like domain"/>
    <property type="match status" value="1"/>
</dbReference>
<dbReference type="HAMAP" id="MF_01009">
    <property type="entry name" value="Thiosulf_sulfurtr"/>
    <property type="match status" value="1"/>
</dbReference>
<dbReference type="InterPro" id="IPR050229">
    <property type="entry name" value="GlpE_sulfurtransferase"/>
</dbReference>
<dbReference type="InterPro" id="IPR001763">
    <property type="entry name" value="Rhodanese-like_dom"/>
</dbReference>
<dbReference type="InterPro" id="IPR036873">
    <property type="entry name" value="Rhodanese-like_dom_sf"/>
</dbReference>
<dbReference type="InterPro" id="IPR023695">
    <property type="entry name" value="Thiosulf_sulfurTrfase"/>
</dbReference>
<dbReference type="NCBIfam" id="NF001195">
    <property type="entry name" value="PRK00162.1"/>
    <property type="match status" value="1"/>
</dbReference>
<dbReference type="PANTHER" id="PTHR43031">
    <property type="entry name" value="FAD-DEPENDENT OXIDOREDUCTASE"/>
    <property type="match status" value="1"/>
</dbReference>
<dbReference type="PANTHER" id="PTHR43031:SF6">
    <property type="entry name" value="THIOSULFATE SULFURTRANSFERASE GLPE"/>
    <property type="match status" value="1"/>
</dbReference>
<dbReference type="Pfam" id="PF00581">
    <property type="entry name" value="Rhodanese"/>
    <property type="match status" value="1"/>
</dbReference>
<dbReference type="SMART" id="SM00450">
    <property type="entry name" value="RHOD"/>
    <property type="match status" value="1"/>
</dbReference>
<dbReference type="SUPFAM" id="SSF52821">
    <property type="entry name" value="Rhodanese/Cell cycle control phosphatase"/>
    <property type="match status" value="1"/>
</dbReference>
<dbReference type="PROSITE" id="PS50206">
    <property type="entry name" value="RHODANESE_3"/>
    <property type="match status" value="1"/>
</dbReference>
<accession>B5R384</accession>
<sequence length="108" mass="11973">MEQFECITVEEAYQKLHQGAAVLVDIRDPQSYAMGHAPQAFHLTNDTLGAFMREHGFDTAVMVMCYHGNSSKGAAQYLLQQGYDAVYSIDGGFEAWHRRFPADVANGA</sequence>
<protein>
    <recommendedName>
        <fullName evidence="1">Thiosulfate sulfurtransferase GlpE</fullName>
        <ecNumber evidence="1">2.8.1.1</ecNumber>
    </recommendedName>
</protein>